<sequence>MPPPHRNHNFRPENVLKRAEDLIAVDKREAALETLYEFITSKRIRYLQVEDLEPIALLLMELAVDLRKGKLAKDALHQYKKNVQMSENGLESVQVVVKRFVDLAEKKLNDAQAKADIKIDQDEDEDLETSQTPESILMSAVSNTDTADRTERELVTPWLRFLWEAFRAVLDILRNNSKTEVTYSTIVNQAFQFCFRFNRKAEFRRLCELLRAHIQTVTTQPKTAGTTNAIDLSDSETIQRYLDQRFSQLNISVKLELWQESFRSVDDVHTLITASKKTPKPVMMANYYENLARIFAVSDNGLFHAAAWNKFFNLYSQSPNATDDELSHYASILVLSTLSIPQRSSNSNETVVDDHRAKNAKLSSLLNLSHVPTRDSLLKSIVSRQILSFVDPCVKKLFDVLGENNFHPLTIKKEIAALFKEIEADKDYKHYIKTLTEVVSVRIFQQVSQVYETVKLDFLVSLGIFEGTEYTLSALEVENLIAIATKEGHLALTIDHESGVVTFKSSPFEDSLSDSLTSRLQISPAELVRSQLQKFAYTLSKTVDTIDPENARRLEASREAAVKRAVAGISEEQEEIANRVKVMDERKRVIDVAKRKQDEEAARLKSERLSAEQKAEQERMLAEQERRSLEKLEREKHLIREREKRKIAEEINAKGIIKIDLDNLENLDTDKLRIMQIEQLNKDKKNLEEKLRALSKKTDHTERAFRRYELQYLEKDAEAQIEQEAKNYELVKANKIAKAKKDFEEAHALKERFTRLVPDYSEFKSEINAKNKDKLKQLQAEAKAQLERAKQERIEQIKRERIEELAQRKREQIQAEQEEARRRQKEEELAKLKEEIRLQREKDAEMLKRRQNVEAEVASRKAAITPAAPAEAKPMTYAEKLKLKRQQAGRS</sequence>
<feature type="chain" id="PRO_0000366368" description="Eukaryotic translation initiation factor 3 subunit A">
    <location>
        <begin position="1"/>
        <end position="891"/>
    </location>
</feature>
<feature type="domain" description="PCI" evidence="2">
    <location>
        <begin position="326"/>
        <end position="508"/>
    </location>
</feature>
<feature type="region of interest" description="Disordered" evidence="3">
    <location>
        <begin position="604"/>
        <end position="627"/>
    </location>
</feature>
<feature type="region of interest" description="Disordered" evidence="3">
    <location>
        <begin position="809"/>
        <end position="828"/>
    </location>
</feature>
<feature type="region of interest" description="Disordered" evidence="3">
    <location>
        <begin position="854"/>
        <end position="877"/>
    </location>
</feature>
<feature type="coiled-coil region" evidence="1">
    <location>
        <begin position="72"/>
        <end position="121"/>
    </location>
</feature>
<feature type="coiled-coil region" evidence="1">
    <location>
        <begin position="593"/>
        <end position="849"/>
    </location>
</feature>
<feature type="compositionally biased region" description="Low complexity" evidence="3">
    <location>
        <begin position="860"/>
        <end position="874"/>
    </location>
</feature>
<comment type="function">
    <text evidence="1">RNA-binding component of the eukaryotic translation initiation factor 3 (eIF-3) complex, which is involved in protein synthesis of a specialized repertoire of mRNAs and, together with other initiation factors, stimulates binding of mRNA and methionyl-tRNAi to the 40S ribosome. The eIF-3 complex specifically targets and initiates translation of a subset of mRNAs involved in cell proliferation.</text>
</comment>
<comment type="subunit">
    <text evidence="1">Component of the eukaryotic translation initiation factor 3 (eIF-3) complex.</text>
</comment>
<comment type="subcellular location">
    <subcellularLocation>
        <location evidence="1">Cytoplasm</location>
    </subcellularLocation>
</comment>
<comment type="similarity">
    <text evidence="1">Belongs to the eIF-3 subunit A family.</text>
</comment>
<evidence type="ECO:0000255" key="1">
    <source>
        <dbReference type="HAMAP-Rule" id="MF_03000"/>
    </source>
</evidence>
<evidence type="ECO:0000255" key="2">
    <source>
        <dbReference type="PROSITE-ProRule" id="PRU01185"/>
    </source>
</evidence>
<evidence type="ECO:0000256" key="3">
    <source>
        <dbReference type="SAM" id="MobiDB-lite"/>
    </source>
</evidence>
<dbReference type="EMBL" id="CH408157">
    <property type="protein sequence ID" value="EDK38672.2"/>
    <property type="molecule type" value="Genomic_DNA"/>
</dbReference>
<dbReference type="RefSeq" id="XP_001485041.1">
    <property type="nucleotide sequence ID" value="XM_001484991.1"/>
</dbReference>
<dbReference type="SMR" id="A5DHL9"/>
<dbReference type="FunCoup" id="A5DHL9">
    <property type="interactions" value="1283"/>
</dbReference>
<dbReference type="STRING" id="294746.A5DHL9"/>
<dbReference type="GeneID" id="5127412"/>
<dbReference type="KEGG" id="pgu:PGUG_02770"/>
<dbReference type="VEuPathDB" id="FungiDB:PGUG_02770"/>
<dbReference type="eggNOG" id="KOG2072">
    <property type="taxonomic scope" value="Eukaryota"/>
</dbReference>
<dbReference type="HOGENOM" id="CLU_002096_2_1_1"/>
<dbReference type="InParanoid" id="A5DHL9"/>
<dbReference type="OMA" id="EHITNKR"/>
<dbReference type="OrthoDB" id="18884at2759"/>
<dbReference type="Proteomes" id="UP000001997">
    <property type="component" value="Unassembled WGS sequence"/>
</dbReference>
<dbReference type="GO" id="GO:0010494">
    <property type="term" value="C:cytoplasmic stress granule"/>
    <property type="evidence" value="ECO:0007669"/>
    <property type="project" value="EnsemblFungi"/>
</dbReference>
<dbReference type="GO" id="GO:0016282">
    <property type="term" value="C:eukaryotic 43S preinitiation complex"/>
    <property type="evidence" value="ECO:0007669"/>
    <property type="project" value="UniProtKB-UniRule"/>
</dbReference>
<dbReference type="GO" id="GO:0033290">
    <property type="term" value="C:eukaryotic 48S preinitiation complex"/>
    <property type="evidence" value="ECO:0007669"/>
    <property type="project" value="UniProtKB-UniRule"/>
</dbReference>
<dbReference type="GO" id="GO:0071540">
    <property type="term" value="C:eukaryotic translation initiation factor 3 complex, eIF3e"/>
    <property type="evidence" value="ECO:0007669"/>
    <property type="project" value="EnsemblFungi"/>
</dbReference>
<dbReference type="GO" id="GO:0071541">
    <property type="term" value="C:eukaryotic translation initiation factor 3 complex, eIF3m"/>
    <property type="evidence" value="ECO:0007669"/>
    <property type="project" value="EnsemblFungi"/>
</dbReference>
<dbReference type="GO" id="GO:0043614">
    <property type="term" value="C:multi-eIF complex"/>
    <property type="evidence" value="ECO:0007669"/>
    <property type="project" value="TreeGrafter"/>
</dbReference>
<dbReference type="GO" id="GO:0003729">
    <property type="term" value="F:mRNA binding"/>
    <property type="evidence" value="ECO:0007669"/>
    <property type="project" value="TreeGrafter"/>
</dbReference>
<dbReference type="GO" id="GO:0003743">
    <property type="term" value="F:translation initiation factor activity"/>
    <property type="evidence" value="ECO:0007669"/>
    <property type="project" value="UniProtKB-UniRule"/>
</dbReference>
<dbReference type="GO" id="GO:0001732">
    <property type="term" value="P:formation of cytoplasmic translation initiation complex"/>
    <property type="evidence" value="ECO:0007669"/>
    <property type="project" value="UniProtKB-UniRule"/>
</dbReference>
<dbReference type="GO" id="GO:0002188">
    <property type="term" value="P:translation reinitiation"/>
    <property type="evidence" value="ECO:0007669"/>
    <property type="project" value="TreeGrafter"/>
</dbReference>
<dbReference type="FunFam" id="4.10.860.10:FF:000001">
    <property type="entry name" value="Eukaryotic translation initiation factor 3 subunit A"/>
    <property type="match status" value="1"/>
</dbReference>
<dbReference type="Gene3D" id="1.25.40.860">
    <property type="match status" value="2"/>
</dbReference>
<dbReference type="Gene3D" id="4.10.860.10">
    <property type="entry name" value="UVR domain"/>
    <property type="match status" value="1"/>
</dbReference>
<dbReference type="HAMAP" id="MF_03000">
    <property type="entry name" value="eIF3a"/>
    <property type="match status" value="1"/>
</dbReference>
<dbReference type="InterPro" id="IPR027512">
    <property type="entry name" value="EIF3A"/>
</dbReference>
<dbReference type="InterPro" id="IPR054711">
    <property type="entry name" value="eIF3a_PCI_TPR-like"/>
</dbReference>
<dbReference type="InterPro" id="IPR000717">
    <property type="entry name" value="PCI_dom"/>
</dbReference>
<dbReference type="PANTHER" id="PTHR14005:SF0">
    <property type="entry name" value="EUKARYOTIC TRANSLATION INITIATION FACTOR 3 SUBUNIT A"/>
    <property type="match status" value="1"/>
</dbReference>
<dbReference type="PANTHER" id="PTHR14005">
    <property type="entry name" value="EUKARYOTIC TRANSLATION INITIATION FACTOR 3, THETA SUBUNIT"/>
    <property type="match status" value="1"/>
</dbReference>
<dbReference type="Pfam" id="PF22591">
    <property type="entry name" value="eIF3a_PCI_TPR-like"/>
    <property type="match status" value="1"/>
</dbReference>
<dbReference type="Pfam" id="PF01399">
    <property type="entry name" value="PCI"/>
    <property type="match status" value="1"/>
</dbReference>
<dbReference type="PROSITE" id="PS50250">
    <property type="entry name" value="PCI"/>
    <property type="match status" value="1"/>
</dbReference>
<proteinExistence type="inferred from homology"/>
<keyword id="KW-0175">Coiled coil</keyword>
<keyword id="KW-0963">Cytoplasm</keyword>
<keyword id="KW-0396">Initiation factor</keyword>
<keyword id="KW-0648">Protein biosynthesis</keyword>
<keyword id="KW-1185">Reference proteome</keyword>
<keyword id="KW-0694">RNA-binding</keyword>
<name>EIF3A_PICGU</name>
<reference key="1">
    <citation type="journal article" date="2009" name="Nature">
        <title>Evolution of pathogenicity and sexual reproduction in eight Candida genomes.</title>
        <authorList>
            <person name="Butler G."/>
            <person name="Rasmussen M.D."/>
            <person name="Lin M.F."/>
            <person name="Santos M.A.S."/>
            <person name="Sakthikumar S."/>
            <person name="Munro C.A."/>
            <person name="Rheinbay E."/>
            <person name="Grabherr M."/>
            <person name="Forche A."/>
            <person name="Reedy J.L."/>
            <person name="Agrafioti I."/>
            <person name="Arnaud M.B."/>
            <person name="Bates S."/>
            <person name="Brown A.J.P."/>
            <person name="Brunke S."/>
            <person name="Costanzo M.C."/>
            <person name="Fitzpatrick D.A."/>
            <person name="de Groot P.W.J."/>
            <person name="Harris D."/>
            <person name="Hoyer L.L."/>
            <person name="Hube B."/>
            <person name="Klis F.M."/>
            <person name="Kodira C."/>
            <person name="Lennard N."/>
            <person name="Logue M.E."/>
            <person name="Martin R."/>
            <person name="Neiman A.M."/>
            <person name="Nikolaou E."/>
            <person name="Quail M.A."/>
            <person name="Quinn J."/>
            <person name="Santos M.C."/>
            <person name="Schmitzberger F.F."/>
            <person name="Sherlock G."/>
            <person name="Shah P."/>
            <person name="Silverstein K.A.T."/>
            <person name="Skrzypek M.S."/>
            <person name="Soll D."/>
            <person name="Staggs R."/>
            <person name="Stansfield I."/>
            <person name="Stumpf M.P.H."/>
            <person name="Sudbery P.E."/>
            <person name="Srikantha T."/>
            <person name="Zeng Q."/>
            <person name="Berman J."/>
            <person name="Berriman M."/>
            <person name="Heitman J."/>
            <person name="Gow N.A.R."/>
            <person name="Lorenz M.C."/>
            <person name="Birren B.W."/>
            <person name="Kellis M."/>
            <person name="Cuomo C.A."/>
        </authorList>
    </citation>
    <scope>NUCLEOTIDE SEQUENCE [LARGE SCALE GENOMIC DNA]</scope>
    <source>
        <strain>ATCC 6260 / CBS 566 / DSM 6381 / JCM 1539 / NBRC 10279 / NRRL Y-324</strain>
    </source>
</reference>
<gene>
    <name evidence="1" type="primary">TIF32</name>
    <name type="ORF">PGUG_02770</name>
</gene>
<organism>
    <name type="scientific">Meyerozyma guilliermondii (strain ATCC 6260 / CBS 566 / DSM 6381 / JCM 1539 / NBRC 10279 / NRRL Y-324)</name>
    <name type="common">Yeast</name>
    <name type="synonym">Candida guilliermondii</name>
    <dbReference type="NCBI Taxonomy" id="294746"/>
    <lineage>
        <taxon>Eukaryota</taxon>
        <taxon>Fungi</taxon>
        <taxon>Dikarya</taxon>
        <taxon>Ascomycota</taxon>
        <taxon>Saccharomycotina</taxon>
        <taxon>Pichiomycetes</taxon>
        <taxon>Debaryomycetaceae</taxon>
        <taxon>Meyerozyma</taxon>
    </lineage>
</organism>
<accession>A5DHL9</accession>
<protein>
    <recommendedName>
        <fullName evidence="1">Eukaryotic translation initiation factor 3 subunit A</fullName>
        <shortName evidence="1">eIF3a</shortName>
    </recommendedName>
    <alternativeName>
        <fullName evidence="1">Eukaryotic translation initiation factor 3 110 kDa subunit homolog</fullName>
        <shortName evidence="1">eIF3 p110</shortName>
    </alternativeName>
    <alternativeName>
        <fullName evidence="1">Translation initiation factor eIF3, p110 subunit homolog</fullName>
    </alternativeName>
</protein>